<proteinExistence type="inferred from homology"/>
<accession>A9L3I3</accession>
<name>CMOA_SHEB9</name>
<sequence length="243" mass="27456">MNVSQDTIYAQASEHISDFQFDNRVAGVFSDMIRRSVPGYTQIINTIGDFADRFVMPNTQIYDLGCSLGAATLSIRRQIQGRQCRIIAVDNSESMVARCQENLNAYVSDTDVDLVCGDIRDIDIQNASLVVLNFTLQFLPPEDRETLIAKIYQGLNPGGILVLSEKIRFEDAPIQTLLEEQHLDFKRANGYSELEISQKRSALENVMKPDTLTTHQQRLTSQGFSHFSLWFQCFNFASMVAIK</sequence>
<reference key="1">
    <citation type="submission" date="2007-11" db="EMBL/GenBank/DDBJ databases">
        <title>Complete sequence of chromosome of Shewanella baltica OS195.</title>
        <authorList>
            <consortium name="US DOE Joint Genome Institute"/>
            <person name="Copeland A."/>
            <person name="Lucas S."/>
            <person name="Lapidus A."/>
            <person name="Barry K."/>
            <person name="Glavina del Rio T."/>
            <person name="Dalin E."/>
            <person name="Tice H."/>
            <person name="Pitluck S."/>
            <person name="Chain P."/>
            <person name="Malfatti S."/>
            <person name="Shin M."/>
            <person name="Vergez L."/>
            <person name="Schmutz J."/>
            <person name="Larimer F."/>
            <person name="Land M."/>
            <person name="Hauser L."/>
            <person name="Kyrpides N."/>
            <person name="Kim E."/>
            <person name="Brettar I."/>
            <person name="Rodrigues J."/>
            <person name="Konstantinidis K."/>
            <person name="Klappenbach J."/>
            <person name="Hofle M."/>
            <person name="Tiedje J."/>
            <person name="Richardson P."/>
        </authorList>
    </citation>
    <scope>NUCLEOTIDE SEQUENCE [LARGE SCALE GENOMIC DNA]</scope>
    <source>
        <strain>OS195</strain>
    </source>
</reference>
<dbReference type="EC" id="2.1.3.-" evidence="1"/>
<dbReference type="EMBL" id="CP000891">
    <property type="protein sequence ID" value="ABX49593.1"/>
    <property type="molecule type" value="Genomic_DNA"/>
</dbReference>
<dbReference type="RefSeq" id="WP_006081747.1">
    <property type="nucleotide sequence ID" value="NC_009997.1"/>
</dbReference>
<dbReference type="SMR" id="A9L3I3"/>
<dbReference type="GeneID" id="11772542"/>
<dbReference type="KEGG" id="sbn:Sbal195_2425"/>
<dbReference type="HOGENOM" id="CLU_078475_0_0_6"/>
<dbReference type="Proteomes" id="UP000000770">
    <property type="component" value="Chromosome"/>
</dbReference>
<dbReference type="GO" id="GO:0016743">
    <property type="term" value="F:carboxyl- or carbamoyltransferase activity"/>
    <property type="evidence" value="ECO:0007669"/>
    <property type="project" value="UniProtKB-UniRule"/>
</dbReference>
<dbReference type="GO" id="GO:1904047">
    <property type="term" value="F:S-adenosyl-L-methionine binding"/>
    <property type="evidence" value="ECO:0007669"/>
    <property type="project" value="UniProtKB-UniRule"/>
</dbReference>
<dbReference type="GO" id="GO:0002098">
    <property type="term" value="P:tRNA wobble uridine modification"/>
    <property type="evidence" value="ECO:0007669"/>
    <property type="project" value="InterPro"/>
</dbReference>
<dbReference type="CDD" id="cd02440">
    <property type="entry name" value="AdoMet_MTases"/>
    <property type="match status" value="1"/>
</dbReference>
<dbReference type="Gene3D" id="3.40.50.150">
    <property type="entry name" value="Vaccinia Virus protein VP39"/>
    <property type="match status" value="1"/>
</dbReference>
<dbReference type="HAMAP" id="MF_01589">
    <property type="entry name" value="Cx_SAM_synthase"/>
    <property type="match status" value="1"/>
</dbReference>
<dbReference type="InterPro" id="IPR005271">
    <property type="entry name" value="CmoA"/>
</dbReference>
<dbReference type="InterPro" id="IPR041698">
    <property type="entry name" value="Methyltransf_25"/>
</dbReference>
<dbReference type="InterPro" id="IPR029063">
    <property type="entry name" value="SAM-dependent_MTases_sf"/>
</dbReference>
<dbReference type="NCBIfam" id="TIGR00740">
    <property type="entry name" value="carboxy-S-adenosyl-L-methionine synthase CmoA"/>
    <property type="match status" value="1"/>
</dbReference>
<dbReference type="NCBIfam" id="NF011995">
    <property type="entry name" value="PRK15451.1"/>
    <property type="match status" value="1"/>
</dbReference>
<dbReference type="PANTHER" id="PTHR43861:SF2">
    <property type="entry name" value="CARBOXY-S-ADENOSYL-L-METHIONINE SYNTHASE"/>
    <property type="match status" value="1"/>
</dbReference>
<dbReference type="PANTHER" id="PTHR43861">
    <property type="entry name" value="TRANS-ACONITATE 2-METHYLTRANSFERASE-RELATED"/>
    <property type="match status" value="1"/>
</dbReference>
<dbReference type="Pfam" id="PF13649">
    <property type="entry name" value="Methyltransf_25"/>
    <property type="match status" value="1"/>
</dbReference>
<dbReference type="PIRSF" id="PIRSF006325">
    <property type="entry name" value="MeTrfase_bac"/>
    <property type="match status" value="1"/>
</dbReference>
<dbReference type="SUPFAM" id="SSF53335">
    <property type="entry name" value="S-adenosyl-L-methionine-dependent methyltransferases"/>
    <property type="match status" value="1"/>
</dbReference>
<gene>
    <name evidence="1" type="primary">cmoA</name>
    <name type="ordered locus">Sbal195_2425</name>
</gene>
<keyword id="KW-0949">S-adenosyl-L-methionine</keyword>
<keyword id="KW-0808">Transferase</keyword>
<organism>
    <name type="scientific">Shewanella baltica (strain OS195)</name>
    <dbReference type="NCBI Taxonomy" id="399599"/>
    <lineage>
        <taxon>Bacteria</taxon>
        <taxon>Pseudomonadati</taxon>
        <taxon>Pseudomonadota</taxon>
        <taxon>Gammaproteobacteria</taxon>
        <taxon>Alteromonadales</taxon>
        <taxon>Shewanellaceae</taxon>
        <taxon>Shewanella</taxon>
    </lineage>
</organism>
<feature type="chain" id="PRO_1000087963" description="Carboxy-S-adenosyl-L-methionine synthase">
    <location>
        <begin position="1"/>
        <end position="243"/>
    </location>
</feature>
<feature type="binding site" evidence="1">
    <location>
        <position position="40"/>
    </location>
    <ligand>
        <name>S-adenosyl-L-methionine</name>
        <dbReference type="ChEBI" id="CHEBI:59789"/>
    </ligand>
</feature>
<feature type="binding site" evidence="1">
    <location>
        <begin position="65"/>
        <end position="67"/>
    </location>
    <ligand>
        <name>S-adenosyl-L-methionine</name>
        <dbReference type="ChEBI" id="CHEBI:59789"/>
    </ligand>
</feature>
<feature type="binding site" evidence="1">
    <location>
        <begin position="90"/>
        <end position="91"/>
    </location>
    <ligand>
        <name>S-adenosyl-L-methionine</name>
        <dbReference type="ChEBI" id="CHEBI:59789"/>
    </ligand>
</feature>
<feature type="binding site" evidence="1">
    <location>
        <begin position="118"/>
        <end position="119"/>
    </location>
    <ligand>
        <name>S-adenosyl-L-methionine</name>
        <dbReference type="ChEBI" id="CHEBI:59789"/>
    </ligand>
</feature>
<feature type="binding site" evidence="1">
    <location>
        <position position="133"/>
    </location>
    <ligand>
        <name>S-adenosyl-L-methionine</name>
        <dbReference type="ChEBI" id="CHEBI:59789"/>
    </ligand>
</feature>
<feature type="binding site" evidence="1">
    <location>
        <position position="200"/>
    </location>
    <ligand>
        <name>S-adenosyl-L-methionine</name>
        <dbReference type="ChEBI" id="CHEBI:59789"/>
    </ligand>
</feature>
<evidence type="ECO:0000255" key="1">
    <source>
        <dbReference type="HAMAP-Rule" id="MF_01589"/>
    </source>
</evidence>
<protein>
    <recommendedName>
        <fullName evidence="1">Carboxy-S-adenosyl-L-methionine synthase</fullName>
        <shortName evidence="1">Cx-SAM synthase</shortName>
        <ecNumber evidence="1">2.1.3.-</ecNumber>
    </recommendedName>
</protein>
<comment type="function">
    <text evidence="1">Catalyzes the conversion of S-adenosyl-L-methionine (SAM) to carboxy-S-adenosyl-L-methionine (Cx-SAM).</text>
</comment>
<comment type="catalytic activity">
    <reaction evidence="1">
        <text>prephenate + S-adenosyl-L-methionine = carboxy-S-adenosyl-L-methionine + 3-phenylpyruvate + H2O</text>
        <dbReference type="Rhea" id="RHEA:51692"/>
        <dbReference type="ChEBI" id="CHEBI:15377"/>
        <dbReference type="ChEBI" id="CHEBI:18005"/>
        <dbReference type="ChEBI" id="CHEBI:29934"/>
        <dbReference type="ChEBI" id="CHEBI:59789"/>
        <dbReference type="ChEBI" id="CHEBI:134278"/>
    </reaction>
</comment>
<comment type="subunit">
    <text evidence="1">Homodimer.</text>
</comment>
<comment type="similarity">
    <text evidence="1">Belongs to the class I-like SAM-binding methyltransferase superfamily. Cx-SAM synthase family.</text>
</comment>